<keyword id="KW-0378">Hydrolase</keyword>
<keyword id="KW-0479">Metal-binding</keyword>
<keyword id="KW-0862">Zinc</keyword>
<evidence type="ECO:0000255" key="1">
    <source>
        <dbReference type="HAMAP-Rule" id="MF_01374"/>
    </source>
</evidence>
<gene>
    <name evidence="1" type="primary">gloB</name>
    <name type="ordered locus">SPA2508</name>
</gene>
<organism>
    <name type="scientific">Salmonella paratyphi A (strain ATCC 9150 / SARB42)</name>
    <dbReference type="NCBI Taxonomy" id="295319"/>
    <lineage>
        <taxon>Bacteria</taxon>
        <taxon>Pseudomonadati</taxon>
        <taxon>Pseudomonadota</taxon>
        <taxon>Gammaproteobacteria</taxon>
        <taxon>Enterobacterales</taxon>
        <taxon>Enterobacteriaceae</taxon>
        <taxon>Salmonella</taxon>
    </lineage>
</organism>
<feature type="chain" id="PRO_0000309702" description="Hydroxyacylglutathione hydrolase">
    <location>
        <begin position="1"/>
        <end position="251"/>
    </location>
</feature>
<feature type="binding site" evidence="1">
    <location>
        <position position="53"/>
    </location>
    <ligand>
        <name>Zn(2+)</name>
        <dbReference type="ChEBI" id="CHEBI:29105"/>
        <label>1</label>
    </ligand>
</feature>
<feature type="binding site" evidence="1">
    <location>
        <position position="55"/>
    </location>
    <ligand>
        <name>Zn(2+)</name>
        <dbReference type="ChEBI" id="CHEBI:29105"/>
        <label>1</label>
    </ligand>
</feature>
<feature type="binding site" evidence="1">
    <location>
        <position position="57"/>
    </location>
    <ligand>
        <name>Zn(2+)</name>
        <dbReference type="ChEBI" id="CHEBI:29105"/>
        <label>2</label>
    </ligand>
</feature>
<feature type="binding site" evidence="1">
    <location>
        <position position="58"/>
    </location>
    <ligand>
        <name>Zn(2+)</name>
        <dbReference type="ChEBI" id="CHEBI:29105"/>
        <label>2</label>
    </ligand>
</feature>
<feature type="binding site" evidence="1">
    <location>
        <position position="110"/>
    </location>
    <ligand>
        <name>Zn(2+)</name>
        <dbReference type="ChEBI" id="CHEBI:29105"/>
        <label>1</label>
    </ligand>
</feature>
<feature type="binding site" evidence="1">
    <location>
        <position position="127"/>
    </location>
    <ligand>
        <name>Zn(2+)</name>
        <dbReference type="ChEBI" id="CHEBI:29105"/>
        <label>1</label>
    </ligand>
</feature>
<feature type="binding site" evidence="1">
    <location>
        <position position="127"/>
    </location>
    <ligand>
        <name>Zn(2+)</name>
        <dbReference type="ChEBI" id="CHEBI:29105"/>
        <label>2</label>
    </ligand>
</feature>
<feature type="binding site" evidence="1">
    <location>
        <position position="165"/>
    </location>
    <ligand>
        <name>Zn(2+)</name>
        <dbReference type="ChEBI" id="CHEBI:29105"/>
        <label>2</label>
    </ligand>
</feature>
<accession>Q5PFD6</accession>
<dbReference type="EC" id="3.1.2.6" evidence="1"/>
<dbReference type="EMBL" id="CP000026">
    <property type="protein sequence ID" value="AAV78382.1"/>
    <property type="molecule type" value="Genomic_DNA"/>
</dbReference>
<dbReference type="RefSeq" id="WP_001052769.1">
    <property type="nucleotide sequence ID" value="NC_006511.1"/>
</dbReference>
<dbReference type="SMR" id="Q5PFD6"/>
<dbReference type="KEGG" id="spt:SPA2508"/>
<dbReference type="HOGENOM" id="CLU_030571_4_1_6"/>
<dbReference type="UniPathway" id="UPA00619">
    <property type="reaction ID" value="UER00676"/>
</dbReference>
<dbReference type="Proteomes" id="UP000008185">
    <property type="component" value="Chromosome"/>
</dbReference>
<dbReference type="GO" id="GO:0004416">
    <property type="term" value="F:hydroxyacylglutathione hydrolase activity"/>
    <property type="evidence" value="ECO:0007669"/>
    <property type="project" value="UniProtKB-UniRule"/>
</dbReference>
<dbReference type="GO" id="GO:0046872">
    <property type="term" value="F:metal ion binding"/>
    <property type="evidence" value="ECO:0007669"/>
    <property type="project" value="UniProtKB-KW"/>
</dbReference>
<dbReference type="GO" id="GO:0019243">
    <property type="term" value="P:methylglyoxal catabolic process to D-lactate via S-lactoyl-glutathione"/>
    <property type="evidence" value="ECO:0007669"/>
    <property type="project" value="InterPro"/>
</dbReference>
<dbReference type="CDD" id="cd07723">
    <property type="entry name" value="hydroxyacylglutathione_hydrolase_MBL-fold"/>
    <property type="match status" value="1"/>
</dbReference>
<dbReference type="Gene3D" id="3.60.15.10">
    <property type="entry name" value="Ribonuclease Z/Hydroxyacylglutathione hydrolase-like"/>
    <property type="match status" value="1"/>
</dbReference>
<dbReference type="HAMAP" id="MF_01374">
    <property type="entry name" value="Glyoxalase_2"/>
    <property type="match status" value="1"/>
</dbReference>
<dbReference type="InterPro" id="IPR035680">
    <property type="entry name" value="Clx_II_MBL"/>
</dbReference>
<dbReference type="InterPro" id="IPR050110">
    <property type="entry name" value="Glyoxalase_II_hydrolase"/>
</dbReference>
<dbReference type="InterPro" id="IPR032282">
    <property type="entry name" value="HAGH_C"/>
</dbReference>
<dbReference type="InterPro" id="IPR017782">
    <property type="entry name" value="Hydroxyacylglutathione_Hdrlase"/>
</dbReference>
<dbReference type="InterPro" id="IPR001279">
    <property type="entry name" value="Metallo-B-lactamas"/>
</dbReference>
<dbReference type="InterPro" id="IPR036866">
    <property type="entry name" value="RibonucZ/Hydroxyglut_hydro"/>
</dbReference>
<dbReference type="NCBIfam" id="TIGR03413">
    <property type="entry name" value="GSH_gloB"/>
    <property type="match status" value="1"/>
</dbReference>
<dbReference type="NCBIfam" id="NF007597">
    <property type="entry name" value="PRK10241.1"/>
    <property type="match status" value="1"/>
</dbReference>
<dbReference type="PANTHER" id="PTHR43705">
    <property type="entry name" value="HYDROXYACYLGLUTATHIONE HYDROLASE"/>
    <property type="match status" value="1"/>
</dbReference>
<dbReference type="PANTHER" id="PTHR43705:SF1">
    <property type="entry name" value="HYDROXYACYLGLUTATHIONE HYDROLASE GLOB"/>
    <property type="match status" value="1"/>
</dbReference>
<dbReference type="Pfam" id="PF16123">
    <property type="entry name" value="HAGH_C"/>
    <property type="match status" value="1"/>
</dbReference>
<dbReference type="Pfam" id="PF00753">
    <property type="entry name" value="Lactamase_B"/>
    <property type="match status" value="1"/>
</dbReference>
<dbReference type="PIRSF" id="PIRSF005457">
    <property type="entry name" value="Glx"/>
    <property type="match status" value="1"/>
</dbReference>
<dbReference type="SMART" id="SM00849">
    <property type="entry name" value="Lactamase_B"/>
    <property type="match status" value="1"/>
</dbReference>
<dbReference type="SUPFAM" id="SSF56281">
    <property type="entry name" value="Metallo-hydrolase/oxidoreductase"/>
    <property type="match status" value="1"/>
</dbReference>
<proteinExistence type="inferred from homology"/>
<sequence length="251" mass="28672">MNLNSIPAFQDNYIWVLTNDEGRCVIVDPGEAAPVLKAIAEHKWMPEAIFLTHHHHDHVGGVKELLQHFPQMTVYGPAETQDKGATHLVDDGDTIRVLGEKFTLFATPGHTLGHVCYFSHPYLFCGDTLFSGGCGRLFEGTPSQMYQSLMKINSLPDDTLICCAHEYTLANIKFALSILPHDSFINEYYRKVKELRVKKQMTLPVILKNERKINLFLRTEDIDLINEINKETILQQPEARFAWLRSKKDTF</sequence>
<reference key="1">
    <citation type="journal article" date="2004" name="Nat. Genet.">
        <title>Comparison of genome degradation in Paratyphi A and Typhi, human-restricted serovars of Salmonella enterica that cause typhoid.</title>
        <authorList>
            <person name="McClelland M."/>
            <person name="Sanderson K.E."/>
            <person name="Clifton S.W."/>
            <person name="Latreille P."/>
            <person name="Porwollik S."/>
            <person name="Sabo A."/>
            <person name="Meyer R."/>
            <person name="Bieri T."/>
            <person name="Ozersky P."/>
            <person name="McLellan M."/>
            <person name="Harkins C.R."/>
            <person name="Wang C."/>
            <person name="Nguyen C."/>
            <person name="Berghoff A."/>
            <person name="Elliott G."/>
            <person name="Kohlberg S."/>
            <person name="Strong C."/>
            <person name="Du F."/>
            <person name="Carter J."/>
            <person name="Kremizki C."/>
            <person name="Layman D."/>
            <person name="Leonard S."/>
            <person name="Sun H."/>
            <person name="Fulton L."/>
            <person name="Nash W."/>
            <person name="Miner T."/>
            <person name="Minx P."/>
            <person name="Delehaunty K."/>
            <person name="Fronick C."/>
            <person name="Magrini V."/>
            <person name="Nhan M."/>
            <person name="Warren W."/>
            <person name="Florea L."/>
            <person name="Spieth J."/>
            <person name="Wilson R.K."/>
        </authorList>
    </citation>
    <scope>NUCLEOTIDE SEQUENCE [LARGE SCALE GENOMIC DNA]</scope>
    <source>
        <strain>ATCC 9150 / SARB42</strain>
    </source>
</reference>
<protein>
    <recommendedName>
        <fullName evidence="1">Hydroxyacylglutathione hydrolase</fullName>
        <ecNumber evidence="1">3.1.2.6</ecNumber>
    </recommendedName>
    <alternativeName>
        <fullName evidence="1">Glyoxalase II</fullName>
        <shortName evidence="1">Glx II</shortName>
    </alternativeName>
</protein>
<name>GLO2_SALPA</name>
<comment type="function">
    <text evidence="1">Thiolesterase that catalyzes the hydrolysis of S-D-lactoyl-glutathione to form glutathione and D-lactic acid.</text>
</comment>
<comment type="catalytic activity">
    <reaction evidence="1">
        <text>an S-(2-hydroxyacyl)glutathione + H2O = a 2-hydroxy carboxylate + glutathione + H(+)</text>
        <dbReference type="Rhea" id="RHEA:21864"/>
        <dbReference type="ChEBI" id="CHEBI:15377"/>
        <dbReference type="ChEBI" id="CHEBI:15378"/>
        <dbReference type="ChEBI" id="CHEBI:57925"/>
        <dbReference type="ChEBI" id="CHEBI:58896"/>
        <dbReference type="ChEBI" id="CHEBI:71261"/>
        <dbReference type="EC" id="3.1.2.6"/>
    </reaction>
</comment>
<comment type="cofactor">
    <cofactor evidence="1">
        <name>Zn(2+)</name>
        <dbReference type="ChEBI" id="CHEBI:29105"/>
    </cofactor>
    <text evidence="1">Binds 2 Zn(2+) ions per subunit.</text>
</comment>
<comment type="pathway">
    <text evidence="1">Secondary metabolite metabolism; methylglyoxal degradation; (R)-lactate from methylglyoxal: step 2/2.</text>
</comment>
<comment type="subunit">
    <text evidence="1">Monomer.</text>
</comment>
<comment type="similarity">
    <text evidence="1">Belongs to the metallo-beta-lactamase superfamily. Glyoxalase II family.</text>
</comment>